<accession>Q6ZNA1</accession>
<gene>
    <name type="primary">ZNF836</name>
</gene>
<reference key="1">
    <citation type="journal article" date="2004" name="Nature">
        <title>The DNA sequence and biology of human chromosome 19.</title>
        <authorList>
            <person name="Grimwood J."/>
            <person name="Gordon L.A."/>
            <person name="Olsen A.S."/>
            <person name="Terry A."/>
            <person name="Schmutz J."/>
            <person name="Lamerdin J.E."/>
            <person name="Hellsten U."/>
            <person name="Goodstein D."/>
            <person name="Couronne O."/>
            <person name="Tran-Gyamfi M."/>
            <person name="Aerts A."/>
            <person name="Altherr M."/>
            <person name="Ashworth L."/>
            <person name="Bajorek E."/>
            <person name="Black S."/>
            <person name="Branscomb E."/>
            <person name="Caenepeel S."/>
            <person name="Carrano A.V."/>
            <person name="Caoile C."/>
            <person name="Chan Y.M."/>
            <person name="Christensen M."/>
            <person name="Cleland C.A."/>
            <person name="Copeland A."/>
            <person name="Dalin E."/>
            <person name="Dehal P."/>
            <person name="Denys M."/>
            <person name="Detter J.C."/>
            <person name="Escobar J."/>
            <person name="Flowers D."/>
            <person name="Fotopulos D."/>
            <person name="Garcia C."/>
            <person name="Georgescu A.M."/>
            <person name="Glavina T."/>
            <person name="Gomez M."/>
            <person name="Gonzales E."/>
            <person name="Groza M."/>
            <person name="Hammon N."/>
            <person name="Hawkins T."/>
            <person name="Haydu L."/>
            <person name="Ho I."/>
            <person name="Huang W."/>
            <person name="Israni S."/>
            <person name="Jett J."/>
            <person name="Kadner K."/>
            <person name="Kimball H."/>
            <person name="Kobayashi A."/>
            <person name="Larionov V."/>
            <person name="Leem S.-H."/>
            <person name="Lopez F."/>
            <person name="Lou Y."/>
            <person name="Lowry S."/>
            <person name="Malfatti S."/>
            <person name="Martinez D."/>
            <person name="McCready P.M."/>
            <person name="Medina C."/>
            <person name="Morgan J."/>
            <person name="Nelson K."/>
            <person name="Nolan M."/>
            <person name="Ovcharenko I."/>
            <person name="Pitluck S."/>
            <person name="Pollard M."/>
            <person name="Popkie A.P."/>
            <person name="Predki P."/>
            <person name="Quan G."/>
            <person name="Ramirez L."/>
            <person name="Rash S."/>
            <person name="Retterer J."/>
            <person name="Rodriguez A."/>
            <person name="Rogers S."/>
            <person name="Salamov A."/>
            <person name="Salazar A."/>
            <person name="She X."/>
            <person name="Smith D."/>
            <person name="Slezak T."/>
            <person name="Solovyev V."/>
            <person name="Thayer N."/>
            <person name="Tice H."/>
            <person name="Tsai M."/>
            <person name="Ustaszewska A."/>
            <person name="Vo N."/>
            <person name="Wagner M."/>
            <person name="Wheeler J."/>
            <person name="Wu K."/>
            <person name="Xie G."/>
            <person name="Yang J."/>
            <person name="Dubchak I."/>
            <person name="Furey T.S."/>
            <person name="DeJong P."/>
            <person name="Dickson M."/>
            <person name="Gordon D."/>
            <person name="Eichler E.E."/>
            <person name="Pennacchio L.A."/>
            <person name="Richardson P."/>
            <person name="Stubbs L."/>
            <person name="Rokhsar D.S."/>
            <person name="Myers R.M."/>
            <person name="Rubin E.M."/>
            <person name="Lucas S.M."/>
        </authorList>
    </citation>
    <scope>NUCLEOTIDE SEQUENCE [LARGE SCALE GENOMIC DNA]</scope>
</reference>
<reference key="2">
    <citation type="journal article" date="2004" name="Nat. Genet.">
        <title>Complete sequencing and characterization of 21,243 full-length human cDNAs.</title>
        <authorList>
            <person name="Ota T."/>
            <person name="Suzuki Y."/>
            <person name="Nishikawa T."/>
            <person name="Otsuki T."/>
            <person name="Sugiyama T."/>
            <person name="Irie R."/>
            <person name="Wakamatsu A."/>
            <person name="Hayashi K."/>
            <person name="Sato H."/>
            <person name="Nagai K."/>
            <person name="Kimura K."/>
            <person name="Makita H."/>
            <person name="Sekine M."/>
            <person name="Obayashi M."/>
            <person name="Nishi T."/>
            <person name="Shibahara T."/>
            <person name="Tanaka T."/>
            <person name="Ishii S."/>
            <person name="Yamamoto J."/>
            <person name="Saito K."/>
            <person name="Kawai Y."/>
            <person name="Isono Y."/>
            <person name="Nakamura Y."/>
            <person name="Nagahari K."/>
            <person name="Murakami K."/>
            <person name="Yasuda T."/>
            <person name="Iwayanagi T."/>
            <person name="Wagatsuma M."/>
            <person name="Shiratori A."/>
            <person name="Sudo H."/>
            <person name="Hosoiri T."/>
            <person name="Kaku Y."/>
            <person name="Kodaira H."/>
            <person name="Kondo H."/>
            <person name="Sugawara M."/>
            <person name="Takahashi M."/>
            <person name="Kanda K."/>
            <person name="Yokoi T."/>
            <person name="Furuya T."/>
            <person name="Kikkawa E."/>
            <person name="Omura Y."/>
            <person name="Abe K."/>
            <person name="Kamihara K."/>
            <person name="Katsuta N."/>
            <person name="Sato K."/>
            <person name="Tanikawa M."/>
            <person name="Yamazaki M."/>
            <person name="Ninomiya K."/>
            <person name="Ishibashi T."/>
            <person name="Yamashita H."/>
            <person name="Murakawa K."/>
            <person name="Fujimori K."/>
            <person name="Tanai H."/>
            <person name="Kimata M."/>
            <person name="Watanabe M."/>
            <person name="Hiraoka S."/>
            <person name="Chiba Y."/>
            <person name="Ishida S."/>
            <person name="Ono Y."/>
            <person name="Takiguchi S."/>
            <person name="Watanabe S."/>
            <person name="Yosida M."/>
            <person name="Hotuta T."/>
            <person name="Kusano J."/>
            <person name="Kanehori K."/>
            <person name="Takahashi-Fujii A."/>
            <person name="Hara H."/>
            <person name="Tanase T.-O."/>
            <person name="Nomura Y."/>
            <person name="Togiya S."/>
            <person name="Komai F."/>
            <person name="Hara R."/>
            <person name="Takeuchi K."/>
            <person name="Arita M."/>
            <person name="Imose N."/>
            <person name="Musashino K."/>
            <person name="Yuuki H."/>
            <person name="Oshima A."/>
            <person name="Sasaki N."/>
            <person name="Aotsuka S."/>
            <person name="Yoshikawa Y."/>
            <person name="Matsunawa H."/>
            <person name="Ichihara T."/>
            <person name="Shiohata N."/>
            <person name="Sano S."/>
            <person name="Moriya S."/>
            <person name="Momiyama H."/>
            <person name="Satoh N."/>
            <person name="Takami S."/>
            <person name="Terashima Y."/>
            <person name="Suzuki O."/>
            <person name="Nakagawa S."/>
            <person name="Senoh A."/>
            <person name="Mizoguchi H."/>
            <person name="Goto Y."/>
            <person name="Shimizu F."/>
            <person name="Wakebe H."/>
            <person name="Hishigaki H."/>
            <person name="Watanabe T."/>
            <person name="Sugiyama A."/>
            <person name="Takemoto M."/>
            <person name="Kawakami B."/>
            <person name="Yamazaki M."/>
            <person name="Watanabe K."/>
            <person name="Kumagai A."/>
            <person name="Itakura S."/>
            <person name="Fukuzumi Y."/>
            <person name="Fujimori Y."/>
            <person name="Komiyama M."/>
            <person name="Tashiro H."/>
            <person name="Tanigami A."/>
            <person name="Fujiwara T."/>
            <person name="Ono T."/>
            <person name="Yamada K."/>
            <person name="Fujii Y."/>
            <person name="Ozaki K."/>
            <person name="Hirao M."/>
            <person name="Ohmori Y."/>
            <person name="Kawabata A."/>
            <person name="Hikiji T."/>
            <person name="Kobatake N."/>
            <person name="Inagaki H."/>
            <person name="Ikema Y."/>
            <person name="Okamoto S."/>
            <person name="Okitani R."/>
            <person name="Kawakami T."/>
            <person name="Noguchi S."/>
            <person name="Itoh T."/>
            <person name="Shigeta K."/>
            <person name="Senba T."/>
            <person name="Matsumura K."/>
            <person name="Nakajima Y."/>
            <person name="Mizuno T."/>
            <person name="Morinaga M."/>
            <person name="Sasaki M."/>
            <person name="Togashi T."/>
            <person name="Oyama M."/>
            <person name="Hata H."/>
            <person name="Watanabe M."/>
            <person name="Komatsu T."/>
            <person name="Mizushima-Sugano J."/>
            <person name="Satoh T."/>
            <person name="Shirai Y."/>
            <person name="Takahashi Y."/>
            <person name="Nakagawa K."/>
            <person name="Okumura K."/>
            <person name="Nagase T."/>
            <person name="Nomura N."/>
            <person name="Kikuchi H."/>
            <person name="Masuho Y."/>
            <person name="Yamashita R."/>
            <person name="Nakai K."/>
            <person name="Yada T."/>
            <person name="Nakamura Y."/>
            <person name="Ohara O."/>
            <person name="Isogai T."/>
            <person name="Sugano S."/>
        </authorList>
    </citation>
    <scope>NUCLEOTIDE SEQUENCE [LARGE SCALE MRNA] OF 1-891</scope>
    <scope>VARIANTS ILE-219 AND SER-809</scope>
    <source>
        <tissue>Brain</tissue>
    </source>
</reference>
<keyword id="KW-0238">DNA-binding</keyword>
<keyword id="KW-0479">Metal-binding</keyword>
<keyword id="KW-0539">Nucleus</keyword>
<keyword id="KW-1267">Proteomics identification</keyword>
<keyword id="KW-1185">Reference proteome</keyword>
<keyword id="KW-0677">Repeat</keyword>
<keyword id="KW-0804">Transcription</keyword>
<keyword id="KW-0805">Transcription regulation</keyword>
<keyword id="KW-0862">Zinc</keyword>
<keyword id="KW-0863">Zinc-finger</keyword>
<proteinExistence type="evidence at protein level"/>
<organism>
    <name type="scientific">Homo sapiens</name>
    <name type="common">Human</name>
    <dbReference type="NCBI Taxonomy" id="9606"/>
    <lineage>
        <taxon>Eukaryota</taxon>
        <taxon>Metazoa</taxon>
        <taxon>Chordata</taxon>
        <taxon>Craniata</taxon>
        <taxon>Vertebrata</taxon>
        <taxon>Euteleostomi</taxon>
        <taxon>Mammalia</taxon>
        <taxon>Eutheria</taxon>
        <taxon>Euarchontoglires</taxon>
        <taxon>Primates</taxon>
        <taxon>Haplorrhini</taxon>
        <taxon>Catarrhini</taxon>
        <taxon>Hominidae</taxon>
        <taxon>Homo</taxon>
    </lineage>
</organism>
<comment type="function">
    <text>May be involved in transcriptional regulation.</text>
</comment>
<comment type="subcellular location">
    <subcellularLocation>
        <location evidence="4">Nucleus</location>
    </subcellularLocation>
</comment>
<comment type="similarity">
    <text evidence="4">Belongs to the krueppel C2H2-type zinc-finger protein family.</text>
</comment>
<evidence type="ECO:0000255" key="1">
    <source>
        <dbReference type="PROSITE-ProRule" id="PRU00042"/>
    </source>
</evidence>
<evidence type="ECO:0000255" key="2">
    <source>
        <dbReference type="PROSITE-ProRule" id="PRU00119"/>
    </source>
</evidence>
<evidence type="ECO:0000269" key="3">
    <source>
    </source>
</evidence>
<evidence type="ECO:0000305" key="4"/>
<dbReference type="EMBL" id="AC010320">
    <property type="status" value="NOT_ANNOTATED_CDS"/>
    <property type="molecule type" value="Genomic_DNA"/>
</dbReference>
<dbReference type="EMBL" id="AC011468">
    <property type="status" value="NOT_ANNOTATED_CDS"/>
    <property type="molecule type" value="Genomic_DNA"/>
</dbReference>
<dbReference type="EMBL" id="AK131308">
    <property type="protein sequence ID" value="BAD18474.1"/>
    <property type="molecule type" value="mRNA"/>
</dbReference>
<dbReference type="CCDS" id="CCDS46162.1"/>
<dbReference type="RefSeq" id="NP_001096127.1">
    <property type="nucleotide sequence ID" value="NM_001102657.3"/>
</dbReference>
<dbReference type="RefSeq" id="XP_011524860.1">
    <property type="nucleotide sequence ID" value="XM_011526558.4"/>
</dbReference>
<dbReference type="RefSeq" id="XP_011524861.1">
    <property type="nucleotide sequence ID" value="XM_011526559.4"/>
</dbReference>
<dbReference type="RefSeq" id="XP_054175996.1">
    <property type="nucleotide sequence ID" value="XM_054320021.1"/>
</dbReference>
<dbReference type="RefSeq" id="XP_054175997.1">
    <property type="nucleotide sequence ID" value="XM_054320022.1"/>
</dbReference>
<dbReference type="SMR" id="Q6ZNA1"/>
<dbReference type="BioGRID" id="127831">
    <property type="interactions" value="5"/>
</dbReference>
<dbReference type="IntAct" id="Q6ZNA1">
    <property type="interactions" value="2"/>
</dbReference>
<dbReference type="STRING" id="9606.ENSP00000470239"/>
<dbReference type="iPTMnet" id="Q6ZNA1"/>
<dbReference type="PhosphoSitePlus" id="Q6ZNA1"/>
<dbReference type="BioMuta" id="ZNF836"/>
<dbReference type="DMDM" id="172046146"/>
<dbReference type="jPOST" id="Q6ZNA1"/>
<dbReference type="MassIVE" id="Q6ZNA1"/>
<dbReference type="PaxDb" id="9606-ENSP00000470239"/>
<dbReference type="PeptideAtlas" id="Q6ZNA1"/>
<dbReference type="ProteomicsDB" id="68001"/>
<dbReference type="Antibodypedia" id="56947">
    <property type="antibodies" value="50 antibodies from 8 providers"/>
</dbReference>
<dbReference type="DNASU" id="162962"/>
<dbReference type="Ensembl" id="ENST00000597252.5">
    <property type="protein sequence ID" value="ENSP00000470239.1"/>
    <property type="gene ID" value="ENSG00000196267.14"/>
</dbReference>
<dbReference type="Ensembl" id="ENST00000682614.1">
    <property type="protein sequence ID" value="ENSP00000507838.1"/>
    <property type="gene ID" value="ENSG00000196267.14"/>
</dbReference>
<dbReference type="GeneID" id="162962"/>
<dbReference type="KEGG" id="hsa:162962"/>
<dbReference type="MANE-Select" id="ENST00000682614.1">
    <property type="protein sequence ID" value="ENSP00000507838.1"/>
    <property type="RefSeq nucleotide sequence ID" value="NM_001102657.3"/>
    <property type="RefSeq protein sequence ID" value="NP_001096127.1"/>
</dbReference>
<dbReference type="UCSC" id="uc010ydi.3">
    <property type="organism name" value="human"/>
</dbReference>
<dbReference type="AGR" id="HGNC:34333"/>
<dbReference type="CTD" id="162962"/>
<dbReference type="GeneCards" id="ZNF836"/>
<dbReference type="HGNC" id="HGNC:34333">
    <property type="gene designation" value="ZNF836"/>
</dbReference>
<dbReference type="HPA" id="ENSG00000196267">
    <property type="expression patterns" value="Tissue enhanced (adrenal)"/>
</dbReference>
<dbReference type="neXtProt" id="NX_Q6ZNA1"/>
<dbReference type="OpenTargets" id="ENSG00000196267"/>
<dbReference type="PharmGKB" id="PA162410788"/>
<dbReference type="VEuPathDB" id="HostDB:ENSG00000196267"/>
<dbReference type="eggNOG" id="KOG1721">
    <property type="taxonomic scope" value="Eukaryota"/>
</dbReference>
<dbReference type="GeneTree" id="ENSGT00940000164568"/>
<dbReference type="HOGENOM" id="CLU_002678_17_1_1"/>
<dbReference type="InParanoid" id="Q6ZNA1"/>
<dbReference type="OMA" id="HQTKHIG"/>
<dbReference type="OrthoDB" id="9411774at2759"/>
<dbReference type="PAN-GO" id="Q6ZNA1">
    <property type="GO annotations" value="4 GO annotations based on evolutionary models"/>
</dbReference>
<dbReference type="PhylomeDB" id="Q6ZNA1"/>
<dbReference type="TreeFam" id="TF343410"/>
<dbReference type="PathwayCommons" id="Q6ZNA1"/>
<dbReference type="SignaLink" id="Q6ZNA1"/>
<dbReference type="BioGRID-ORCS" id="162962">
    <property type="hits" value="6 hits in 1159 CRISPR screens"/>
</dbReference>
<dbReference type="ChiTaRS" id="ZNF836">
    <property type="organism name" value="human"/>
</dbReference>
<dbReference type="GenomeRNAi" id="162962"/>
<dbReference type="Pharos" id="Q6ZNA1">
    <property type="development level" value="Tdark"/>
</dbReference>
<dbReference type="PRO" id="PR:Q6ZNA1"/>
<dbReference type="Proteomes" id="UP000005640">
    <property type="component" value="Chromosome 19"/>
</dbReference>
<dbReference type="RNAct" id="Q6ZNA1">
    <property type="molecule type" value="protein"/>
</dbReference>
<dbReference type="Bgee" id="ENSG00000196267">
    <property type="expression patterns" value="Expressed in buccal mucosa cell and 107 other cell types or tissues"/>
</dbReference>
<dbReference type="ExpressionAtlas" id="Q6ZNA1">
    <property type="expression patterns" value="baseline and differential"/>
</dbReference>
<dbReference type="GO" id="GO:0005634">
    <property type="term" value="C:nucleus"/>
    <property type="evidence" value="ECO:0000318"/>
    <property type="project" value="GO_Central"/>
</dbReference>
<dbReference type="GO" id="GO:0003677">
    <property type="term" value="F:DNA binding"/>
    <property type="evidence" value="ECO:0007669"/>
    <property type="project" value="UniProtKB-KW"/>
</dbReference>
<dbReference type="GO" id="GO:0008270">
    <property type="term" value="F:zinc ion binding"/>
    <property type="evidence" value="ECO:0007669"/>
    <property type="project" value="UniProtKB-KW"/>
</dbReference>
<dbReference type="GO" id="GO:0006357">
    <property type="term" value="P:regulation of transcription by RNA polymerase II"/>
    <property type="evidence" value="ECO:0000318"/>
    <property type="project" value="GO_Central"/>
</dbReference>
<dbReference type="CDD" id="cd07765">
    <property type="entry name" value="KRAB_A-box"/>
    <property type="match status" value="1"/>
</dbReference>
<dbReference type="FunFam" id="3.30.160.60:FF:004137">
    <property type="match status" value="2"/>
</dbReference>
<dbReference type="FunFam" id="3.30.160.60:FF:000062">
    <property type="entry name" value="RB-associated KRAB zinc finger protein-like"/>
    <property type="match status" value="1"/>
</dbReference>
<dbReference type="FunFam" id="3.30.160.60:FF:000380">
    <property type="entry name" value="zinc finger protein 2 isoform X2"/>
    <property type="match status" value="1"/>
</dbReference>
<dbReference type="FunFam" id="3.30.160.60:FF:002343">
    <property type="entry name" value="Zinc finger protein 33A"/>
    <property type="match status" value="1"/>
</dbReference>
<dbReference type="FunFam" id="3.30.160.60:FF:002402">
    <property type="entry name" value="Zinc finger protein 347"/>
    <property type="match status" value="2"/>
</dbReference>
<dbReference type="FunFam" id="3.30.160.60:FF:000848">
    <property type="entry name" value="Zinc finger protein 35"/>
    <property type="match status" value="1"/>
</dbReference>
<dbReference type="FunFam" id="3.30.160.60:FF:000016">
    <property type="entry name" value="zinc finger protein 37 homolog"/>
    <property type="match status" value="1"/>
</dbReference>
<dbReference type="FunFam" id="3.30.160.60:FF:002004">
    <property type="entry name" value="Zinc finger protein 473"/>
    <property type="match status" value="1"/>
</dbReference>
<dbReference type="FunFam" id="3.30.160.60:FF:002090">
    <property type="entry name" value="Zinc finger protein 473"/>
    <property type="match status" value="1"/>
</dbReference>
<dbReference type="FunFam" id="3.30.160.60:FF:002134">
    <property type="entry name" value="Zinc finger protein 616"/>
    <property type="match status" value="1"/>
</dbReference>
<dbReference type="FunFam" id="3.30.160.60:FF:001700">
    <property type="entry name" value="Zinc finger protein 677"/>
    <property type="match status" value="1"/>
</dbReference>
<dbReference type="FunFam" id="3.30.160.60:FF:000394">
    <property type="entry name" value="Zinc finger protein 836"/>
    <property type="match status" value="9"/>
</dbReference>
<dbReference type="FunFam" id="3.30.160.60:FF:001631">
    <property type="entry name" value="Zinc finger protein 836"/>
    <property type="match status" value="2"/>
</dbReference>
<dbReference type="FunFam" id="3.30.160.60:FF:001834">
    <property type="entry name" value="Zinc finger protein 836"/>
    <property type="match status" value="1"/>
</dbReference>
<dbReference type="FunFam" id="3.30.160.60:FF:001884">
    <property type="entry name" value="Zinc finger protein 836"/>
    <property type="match status" value="1"/>
</dbReference>
<dbReference type="FunFam" id="3.30.160.60:FF:002293">
    <property type="entry name" value="Zinc finger protein 836"/>
    <property type="match status" value="1"/>
</dbReference>
<dbReference type="Gene3D" id="6.10.140.140">
    <property type="match status" value="1"/>
</dbReference>
<dbReference type="Gene3D" id="3.30.160.60">
    <property type="entry name" value="Classic Zinc Finger"/>
    <property type="match status" value="25"/>
</dbReference>
<dbReference type="InterPro" id="IPR050752">
    <property type="entry name" value="C2H2-ZF_domain"/>
</dbReference>
<dbReference type="InterPro" id="IPR001909">
    <property type="entry name" value="KRAB"/>
</dbReference>
<dbReference type="InterPro" id="IPR036051">
    <property type="entry name" value="KRAB_dom_sf"/>
</dbReference>
<dbReference type="InterPro" id="IPR036236">
    <property type="entry name" value="Znf_C2H2_sf"/>
</dbReference>
<dbReference type="InterPro" id="IPR013087">
    <property type="entry name" value="Znf_C2H2_type"/>
</dbReference>
<dbReference type="PANTHER" id="PTHR24384">
    <property type="entry name" value="FINGER PUTATIVE TRANSCRIPTION FACTOR FAMILY-RELATED"/>
    <property type="match status" value="1"/>
</dbReference>
<dbReference type="PANTHER" id="PTHR24384:SF246">
    <property type="entry name" value="GENE, 19965-RELATED"/>
    <property type="match status" value="1"/>
</dbReference>
<dbReference type="Pfam" id="PF01352">
    <property type="entry name" value="KRAB"/>
    <property type="match status" value="1"/>
</dbReference>
<dbReference type="Pfam" id="PF00096">
    <property type="entry name" value="zf-C2H2"/>
    <property type="match status" value="24"/>
</dbReference>
<dbReference type="SMART" id="SM00349">
    <property type="entry name" value="KRAB"/>
    <property type="match status" value="1"/>
</dbReference>
<dbReference type="SMART" id="SM00355">
    <property type="entry name" value="ZnF_C2H2"/>
    <property type="match status" value="24"/>
</dbReference>
<dbReference type="SUPFAM" id="SSF57667">
    <property type="entry name" value="beta-beta-alpha zinc fingers"/>
    <property type="match status" value="13"/>
</dbReference>
<dbReference type="SUPFAM" id="SSF109640">
    <property type="entry name" value="KRAB domain (Kruppel-associated box)"/>
    <property type="match status" value="1"/>
</dbReference>
<dbReference type="PROSITE" id="PS50805">
    <property type="entry name" value="KRAB"/>
    <property type="match status" value="1"/>
</dbReference>
<dbReference type="PROSITE" id="PS00028">
    <property type="entry name" value="ZINC_FINGER_C2H2_1"/>
    <property type="match status" value="24"/>
</dbReference>
<dbReference type="PROSITE" id="PS50157">
    <property type="entry name" value="ZINC_FINGER_C2H2_2"/>
    <property type="match status" value="25"/>
</dbReference>
<protein>
    <recommendedName>
        <fullName>Zinc finger protein 836</fullName>
    </recommendedName>
</protein>
<sequence>MALTQGPLTFRDVAIEFSQEEWKSLDPVQKALYWDVMLENYRNLVFLGILPKCMTKELPPIGNSNTGEKCQTVTLERHECYDVENFYLREIQKNLQDLEFQWKDGEINYKEVPMTYKNNLNGKRGQHSQEDVENKCIENQLTLSFQSRLTELQKFQTEGKIYECNQSEKTVNNSSLVSPLQRILPSVQTNISKKYENEFLQLSLPTQLEKTHIREKPYMCKGCGKAFRVSSSLINHQMVHTTEKPYKCNECGKAFHRGSLLTIHQIVHTRGKPYQCGVCGKIFRQNSDLVNHRRSHTGEKPYKCNECGKSFSQSYNLAIHQRIHTGEKPYKCNECGKTFKQGSCLTTHQIIHTGEKPYQCDICGKVFRQNSNLVNHQRIHTGEKPYKCNICGKSFSQSSNLATHQTVHSGNKPYKCDECGKTFKRSSSLTTHQIIHTGEKPYTCDVCDKVFSQRSQLARHQRSHTGEKPYKCNECGKVFSQTSHLVGHRRIHTGEKPYKCDKCGKAFKQGSLLTRHKIIHTREKRYQCGECGKVFSENSCLVRHLRIHTGEQPYKCNVCGKVFNYSGNLSIHKRIHTGEKPFQCNECGTVFRNYSCLARHLRIHTGQKPYKCNVCGKVFNDSGNLSNHKRIHTGEKPFQCNECGKVFSYYSCLARHRKIHTGEKPYKCNDCGKAYTQRSSLTKHLIIHTGEKPYNCNEFGGAFIQSSKLARYHRNPTGEKPHKCSHCGRTFSHITGLTYHQRRHTGEMPYKCIECGQVFNSTSNLARHRRIHTGEKPYKCNECGKVFRHQSTLARHRSIHTGEKPYVCNECGKAFRVRSILVNHQKMHTGDKPYKCNECGKAFIERSKLVYHQRNHTGEKPYKCIECGKAFGRFSCLNKHQMIHSGEKPYKCNECGKSFISRSGLTKHQTKHTAESLKTKFNVEKPLDVLLTSGFK</sequence>
<name>ZN836_HUMAN</name>
<feature type="chain" id="PRO_0000319434" description="Zinc finger protein 836">
    <location>
        <begin position="1"/>
        <end position="936"/>
    </location>
</feature>
<feature type="domain" description="KRAB" evidence="2">
    <location>
        <begin position="8"/>
        <end position="83"/>
    </location>
</feature>
<feature type="zinc finger region" description="C2H2-type 1" evidence="1">
    <location>
        <begin position="218"/>
        <end position="240"/>
    </location>
</feature>
<feature type="zinc finger region" description="C2H2-type 2" evidence="1">
    <location>
        <begin position="246"/>
        <end position="268"/>
    </location>
</feature>
<feature type="zinc finger region" description="C2H2-type 3" evidence="1">
    <location>
        <begin position="274"/>
        <end position="296"/>
    </location>
</feature>
<feature type="zinc finger region" description="C2H2-type 4" evidence="1">
    <location>
        <begin position="302"/>
        <end position="324"/>
    </location>
</feature>
<feature type="zinc finger region" description="C2H2-type 5" evidence="1">
    <location>
        <begin position="330"/>
        <end position="352"/>
    </location>
</feature>
<feature type="zinc finger region" description="C2H2-type 6" evidence="1">
    <location>
        <begin position="358"/>
        <end position="380"/>
    </location>
</feature>
<feature type="zinc finger region" description="C2H2-type 7" evidence="1">
    <location>
        <begin position="386"/>
        <end position="408"/>
    </location>
</feature>
<feature type="zinc finger region" description="C2H2-type 8" evidence="1">
    <location>
        <begin position="414"/>
        <end position="436"/>
    </location>
</feature>
<feature type="zinc finger region" description="C2H2-type 9" evidence="1">
    <location>
        <begin position="442"/>
        <end position="464"/>
    </location>
</feature>
<feature type="zinc finger region" description="C2H2-type 10" evidence="1">
    <location>
        <begin position="470"/>
        <end position="492"/>
    </location>
</feature>
<feature type="zinc finger region" description="C2H2-type 11" evidence="1">
    <location>
        <begin position="498"/>
        <end position="520"/>
    </location>
</feature>
<feature type="zinc finger region" description="C2H2-type 12" evidence="1">
    <location>
        <begin position="526"/>
        <end position="548"/>
    </location>
</feature>
<feature type="zinc finger region" description="C2H2-type 13" evidence="1">
    <location>
        <begin position="554"/>
        <end position="576"/>
    </location>
</feature>
<feature type="zinc finger region" description="C2H2-type 14" evidence="1">
    <location>
        <begin position="582"/>
        <end position="604"/>
    </location>
</feature>
<feature type="zinc finger region" description="C2H2-type 15" evidence="1">
    <location>
        <begin position="610"/>
        <end position="632"/>
    </location>
</feature>
<feature type="zinc finger region" description="C2H2-type 16" evidence="1">
    <location>
        <begin position="638"/>
        <end position="660"/>
    </location>
</feature>
<feature type="zinc finger region" description="C2H2-type 17" evidence="1">
    <location>
        <begin position="666"/>
        <end position="688"/>
    </location>
</feature>
<feature type="zinc finger region" description="C2H2-type 18; degenerate" evidence="1">
    <location>
        <begin position="694"/>
        <end position="716"/>
    </location>
</feature>
<feature type="zinc finger region" description="C2H2-type 19" evidence="1">
    <location>
        <begin position="722"/>
        <end position="744"/>
    </location>
</feature>
<feature type="zinc finger region" description="C2H2-type 20" evidence="1">
    <location>
        <begin position="750"/>
        <end position="772"/>
    </location>
</feature>
<feature type="zinc finger region" description="C2H2-type 21" evidence="1">
    <location>
        <begin position="778"/>
        <end position="800"/>
    </location>
</feature>
<feature type="zinc finger region" description="C2H2-type 22" evidence="1">
    <location>
        <begin position="806"/>
        <end position="828"/>
    </location>
</feature>
<feature type="zinc finger region" description="C2H2-type 23" evidence="1">
    <location>
        <begin position="834"/>
        <end position="856"/>
    </location>
</feature>
<feature type="zinc finger region" description="C2H2-type 24" evidence="1">
    <location>
        <begin position="862"/>
        <end position="884"/>
    </location>
</feature>
<feature type="zinc finger region" description="C2H2-type 25" evidence="1">
    <location>
        <begin position="890"/>
        <end position="912"/>
    </location>
</feature>
<feature type="sequence variant" id="VAR_039001" description="In dbSNP:rs1366245." evidence="3">
    <original>M</original>
    <variation>I</variation>
    <location>
        <position position="219"/>
    </location>
</feature>
<feature type="sequence variant" id="VAR_039002" description="In dbSNP:rs8113504." evidence="3">
    <original>N</original>
    <variation>S</variation>
    <location>
        <position position="809"/>
    </location>
</feature>
<feature type="sequence conflict" description="In Ref. 2; BAD18474." evidence="4" ref="2">
    <original>I</original>
    <variation>V</variation>
    <location>
        <position position="434"/>
    </location>
</feature>
<feature type="sequence conflict" description="In Ref. 2; BAD18474." evidence="4" ref="2">
    <original>S</original>
    <variation>G</variation>
    <location>
        <position position="463"/>
    </location>
</feature>
<feature type="sequence conflict" description="In Ref. 2; BAD18474." evidence="4" ref="2">
    <original>H</original>
    <variation>R</variation>
    <location>
        <position position="576"/>
    </location>
</feature>
<feature type="sequence conflict" description="In Ref. 2; BAD18474." evidence="4" ref="2">
    <original>T</original>
    <variation>A</variation>
    <location>
        <position position="661"/>
    </location>
</feature>